<accession>Q9XGW1</accession>
<accession>O49256</accession>
<evidence type="ECO:0000255" key="1">
    <source>
        <dbReference type="PROSITE-ProRule" id="PRU00142"/>
    </source>
</evidence>
<evidence type="ECO:0000255" key="2">
    <source>
        <dbReference type="PROSITE-ProRule" id="PRU00150"/>
    </source>
</evidence>
<evidence type="ECO:0000256" key="3">
    <source>
        <dbReference type="SAM" id="MobiDB-lite"/>
    </source>
</evidence>
<evidence type="ECO:0000269" key="4">
    <source>
    </source>
</evidence>
<evidence type="ECO:0000269" key="5">
    <source>
    </source>
</evidence>
<evidence type="ECO:0000269" key="6">
    <source>
    </source>
</evidence>
<evidence type="ECO:0000269" key="7">
    <source>
    </source>
</evidence>
<evidence type="ECO:0000269" key="8">
    <source>
    </source>
</evidence>
<evidence type="ECO:0000269" key="9">
    <source>
    </source>
</evidence>
<evidence type="ECO:0000269" key="10">
    <source>
    </source>
</evidence>
<evidence type="ECO:0000269" key="11">
    <source>
    </source>
</evidence>
<evidence type="ECO:0000269" key="12">
    <source>
    </source>
</evidence>
<evidence type="ECO:0000303" key="13">
    <source>
    </source>
</evidence>
<evidence type="ECO:0000303" key="14">
    <source>
    </source>
</evidence>
<evidence type="ECO:0000303" key="15">
    <source>
    </source>
</evidence>
<evidence type="ECO:0000303" key="16">
    <source>
    </source>
</evidence>
<evidence type="ECO:0000305" key="17"/>
<evidence type="ECO:0000312" key="18">
    <source>
        <dbReference type="Araport" id="AT5G43810"/>
    </source>
</evidence>
<evidence type="ECO:0000312" key="19">
    <source>
        <dbReference type="EMBL" id="BAB11310.1"/>
    </source>
</evidence>
<evidence type="ECO:0007829" key="20">
    <source>
        <dbReference type="PDB" id="7SVA"/>
    </source>
</evidence>
<gene>
    <name evidence="14" type="primary">AGO10</name>
    <name evidence="13 16" type="synonym">PNH</name>
    <name evidence="15 16" type="synonym">ZLL</name>
    <name evidence="18" type="ordered locus">At5g43810</name>
    <name evidence="19" type="ORF">MQD19.17</name>
</gene>
<name>AGO10_ARATH</name>
<protein>
    <recommendedName>
        <fullName evidence="14">Protein argonaute 10</fullName>
    </recommendedName>
    <alternativeName>
        <fullName evidence="13 16">Protein PINHEAD</fullName>
    </alternativeName>
    <alternativeName>
        <fullName evidence="15 16">Protein ZWILLE</fullName>
    </alternativeName>
</protein>
<comment type="function">
    <text evidence="4 5 6 7 9 11 12">Involved in RNA-mediated post-transcriptional gene silencing (PTGS). Main component of the RNA-induced silencing complex (RISC) that binds to a short guide RNA such as a microRNA (miRNA) or small interfering RNA (siRNA). RISC uses the mature miRNA or siRNA as a guide for slicer-directed cleavage of homologous mRNAs to repress gene expression. Required for reliable formation of primary and axillary shoot apical meristems. Specifies leaf adaxial identity by repressing the miR165 and miR166 microRNAs in the embryonic shoot apex, in the shoot apical meristem (SAM) and leaf. Represses the microRNA miR398 which targets CCS1 chaperone mRNAs for translational inhibition. Acts as a negative regulator of AGO1 protein level. Like AGO1, is required for stem cell function and organ polarity. Unlike AGO1, is not subjected to small RNA-mediated repression itself. Essential for multiple processes in development. Coregulates, with GATA18/HAN, the shoot apical meristem (SAM) organization (PubMed:26390296).</text>
</comment>
<comment type="subunit">
    <text evidence="9 10">Interacts with GATA18/HAN and KNAT1/BP (PubMed:26390296). Interacts with RICE1 and RICE2 that act as cofactors (PubMed:28463111).</text>
</comment>
<comment type="subcellular location">
    <subcellularLocation>
        <location evidence="10">Cytoplasm</location>
    </subcellularLocation>
</comment>
<comment type="tissue specificity">
    <text evidence="4 9 12">Expressed in roots, stems, leaves, developing embryo, siliques, inflorescences, provascular tissue, shoot apical meristem (SAM) and adaxial (upper) sides of lateral organ primordia. Observed in the floral meristem, the adaxial side of sepal primordia, and the provascular tissue (PubMed:26390296).</text>
</comment>
<comment type="induction">
    <text evidence="8">Up-regulated by REV (PubMed:22781836).</text>
</comment>
<comment type="disruption phenotype">
    <text evidence="6 9 11 12">Defects in meristem formation. Shoot apical meristem (SAM) terminates to a flat meristem, a small radially symmetric pin-like structure that lacks a vascular strand, a radially symmetric leaf, a single leaf or two leaves fused on their adaxial sides. Abnormal ovules and embryos. The double mutant pnh-2 han-2 has smaller inflorescence meristems (IM) and taller floral meristems (FM) leading to fewer petals (PubMed:26390296).</text>
</comment>
<comment type="miscellaneous">
    <text>Plants overexpressing AGO10 show upward curling of leaf blades and double cotyledon-like structures.</text>
</comment>
<comment type="similarity">
    <text evidence="17">Belongs to the argonaute family. Ago subfamily.</text>
</comment>
<organism>
    <name type="scientific">Arabidopsis thaliana</name>
    <name type="common">Mouse-ear cress</name>
    <dbReference type="NCBI Taxonomy" id="3702"/>
    <lineage>
        <taxon>Eukaryota</taxon>
        <taxon>Viridiplantae</taxon>
        <taxon>Streptophyta</taxon>
        <taxon>Embryophyta</taxon>
        <taxon>Tracheophyta</taxon>
        <taxon>Spermatophyta</taxon>
        <taxon>Magnoliopsida</taxon>
        <taxon>eudicotyledons</taxon>
        <taxon>Gunneridae</taxon>
        <taxon>Pentapetalae</taxon>
        <taxon>rosids</taxon>
        <taxon>malvids</taxon>
        <taxon>Brassicales</taxon>
        <taxon>Brassicaceae</taxon>
        <taxon>Camelineae</taxon>
        <taxon>Arabidopsis</taxon>
    </lineage>
</organism>
<reference key="1">
    <citation type="journal article" date="1999" name="Development">
        <title>The PINHEAD/ZWILLE gene acts pleiotropically in Arabidopsis development and has overlapping functions with the ARGONAUTE1 gene.</title>
        <authorList>
            <person name="Lynn K."/>
            <person name="Fernandez A."/>
            <person name="Aida M."/>
            <person name="Sedbrook J."/>
            <person name="Tasaka M."/>
            <person name="Masson P."/>
            <person name="Barton M.K."/>
        </authorList>
    </citation>
    <scope>NUCLEOTIDE SEQUENCE [GENOMIC DNA]</scope>
    <scope>FUNCTION</scope>
    <scope>TISSUE SPECIFICITY</scope>
    <scope>DISRUPTION PHENOTYPE</scope>
    <source>
        <strain>cv. Landsberg erecta</strain>
    </source>
</reference>
<reference key="2">
    <citation type="journal article" date="1998" name="EMBO J.">
        <title>Role of the ZWILLE gene in the regulation of central shoot meristem cell fate during Arabidopsis embryogenesis.</title>
        <authorList>
            <person name="Moussian B."/>
            <person name="Schoof H."/>
            <person name="Haecker A."/>
            <person name="Juergens G."/>
            <person name="Laux T."/>
        </authorList>
    </citation>
    <scope>NUCLEOTIDE SEQUENCE [MRNA]</scope>
    <scope>FUNCTION</scope>
    <scope>DISRUPTION PHENOTYPE</scope>
    <source>
        <strain>cv. Landsberg erecta</strain>
    </source>
</reference>
<reference key="3">
    <citation type="submission" date="1999-04" db="EMBL/GenBank/DDBJ databases">
        <title>Structural analysis of Arabidopsis thaliana chromosome 5. XI.</title>
        <authorList>
            <person name="Kaneko T."/>
            <person name="Katoh T."/>
            <person name="Asamizu E."/>
            <person name="Sato S."/>
            <person name="Nakamura Y."/>
            <person name="Kotani H."/>
            <person name="Tabata S."/>
        </authorList>
    </citation>
    <scope>NUCLEOTIDE SEQUENCE [LARGE SCALE GENOMIC DNA]</scope>
    <source>
        <strain>cv. Columbia</strain>
    </source>
</reference>
<reference key="4">
    <citation type="journal article" date="2017" name="Plant J.">
        <title>Araport11: a complete reannotation of the Arabidopsis thaliana reference genome.</title>
        <authorList>
            <person name="Cheng C.Y."/>
            <person name="Krishnakumar V."/>
            <person name="Chan A.P."/>
            <person name="Thibaud-Nissen F."/>
            <person name="Schobel S."/>
            <person name="Town C.D."/>
        </authorList>
    </citation>
    <scope>GENOME REANNOTATION</scope>
    <source>
        <strain>cv. Columbia</strain>
    </source>
</reference>
<reference key="5">
    <citation type="journal article" date="2002" name="Plant Cell">
        <title>Regulation of axis determinacy by the Arabidopsis PINHEAD gene.</title>
        <authorList>
            <person name="Newman K.L."/>
            <person name="Fernandez A.G."/>
            <person name="Barton M.K."/>
        </authorList>
    </citation>
    <scope>FUNCTION</scope>
    <scope>TISSUE SPECIFICITY</scope>
</reference>
<reference key="6">
    <citation type="journal article" date="2009" name="Plant J.">
        <title>The ARGONAUTE10 gene modulates shoot apical meristem maintenance and leaf polarity establishment by repressing miR165/166 in Arabidopsis.</title>
        <authorList>
            <person name="Liu Q."/>
            <person name="Yao X."/>
            <person name="Pi L."/>
            <person name="Wang H."/>
            <person name="Cui X."/>
            <person name="Huang H."/>
        </authorList>
    </citation>
    <scope>FUNCTION</scope>
</reference>
<reference key="7">
    <citation type="journal article" date="2009" name="PLoS Genet.">
        <title>Redundant and specific roles of the ARGONAUTE proteins AGO1 and ZLL in development and small RNA-directed gene silencing.</title>
        <authorList>
            <person name="Mallory A.C."/>
            <person name="Hinze A."/>
            <person name="Tucker M.R."/>
            <person name="Bouche N."/>
            <person name="Gasciolli V."/>
            <person name="Elmayan T."/>
            <person name="Lauressergues D."/>
            <person name="Jauvion V."/>
            <person name="Vaucheret H."/>
            <person name="Laux T."/>
        </authorList>
    </citation>
    <scope>FUNCTION</scope>
    <scope>DISRUPTION PHENOTYPE</scope>
</reference>
<reference key="8">
    <citation type="journal article" date="2010" name="Plant J.">
        <title>microRNA-directed cleavage and translational repression of the copper chaperone for superoxide dismutase mRNA in Arabidopsis.</title>
        <authorList>
            <person name="Beauclair L."/>
            <person name="Yu A."/>
            <person name="Bouche N."/>
        </authorList>
    </citation>
    <scope>FUNCTION</scope>
</reference>
<reference key="9">
    <citation type="journal article" date="2013" name="Mech. Dev.">
        <title>Control of stem cell homeostasis via interlocking microRNA and microProtein feedback loops.</title>
        <authorList>
            <person name="Brandt R."/>
            <person name="Xie Y."/>
            <person name="Musielak T."/>
            <person name="Graeff M."/>
            <person name="Stierhof Y.D."/>
            <person name="Huang H."/>
            <person name="Liu C.M."/>
            <person name="Wenkel S."/>
        </authorList>
    </citation>
    <scope>INDUCTION BY REV</scope>
</reference>
<reference key="10">
    <citation type="journal article" date="2015" name="PLoS Genet.">
        <title>HANABA TARANU (HAN) bridges meristem and organ primordia boundaries through PINHEAD, JAGGED, BLADE-ON-PETIOLE2 and CYTOKININ OXIDASE 3 during flower development in Arabidopsis.</title>
        <authorList>
            <person name="Ding L."/>
            <person name="Yan S."/>
            <person name="Jiang L."/>
            <person name="Zhao W."/>
            <person name="Ning K."/>
            <person name="Zhao J."/>
            <person name="Liu X."/>
            <person name="Zhang J."/>
            <person name="Wang Q."/>
            <person name="Zhang X."/>
        </authorList>
    </citation>
    <scope>FUNCTION</scope>
    <scope>DISRUPTION PHENOTYPE</scope>
    <scope>TISSUE SPECIFICITY</scope>
    <scope>INTERACTION WITH GATA18/HAN AND KNAT1/BP</scope>
</reference>
<reference key="11">
    <citation type="journal article" date="2017" name="Elife">
        <title>RISC-interacting clearing 3'- 5' exoribonucleases (RICEs) degrade uridylated cleavage fragments to maintain functional RISC in Arabidopsis thaliana.</title>
        <authorList>
            <person name="Zhang Z."/>
            <person name="Hu F."/>
            <person name="Sung M.W."/>
            <person name="Shu C."/>
            <person name="Castillo-Gonzalez C."/>
            <person name="Koiwa H."/>
            <person name="Tang G."/>
            <person name="Dickman M."/>
            <person name="Li P."/>
            <person name="Zhang X."/>
        </authorList>
    </citation>
    <scope>INTERACTION WITH RICE1 AND RICE2</scope>
    <scope>SUBCELLULAR LOCATION</scope>
    <source>
        <strain>cv. Columbia</strain>
        <strain>cv. Landsberg erecta</strain>
    </source>
</reference>
<keyword id="KW-0002">3D-structure</keyword>
<keyword id="KW-0963">Cytoplasm</keyword>
<keyword id="KW-0217">Developmental protein</keyword>
<keyword id="KW-1185">Reference proteome</keyword>
<keyword id="KW-0678">Repressor</keyword>
<keyword id="KW-0687">Ribonucleoprotein</keyword>
<keyword id="KW-0694">RNA-binding</keyword>
<keyword id="KW-0943">RNA-mediated gene silencing</keyword>
<keyword id="KW-0804">Transcription</keyword>
<keyword id="KW-0805">Transcription regulation</keyword>
<keyword id="KW-0810">Translation regulation</keyword>
<proteinExistence type="evidence at protein level"/>
<dbReference type="EMBL" id="AF154272">
    <property type="protein sequence ID" value="AAD40098.1"/>
    <property type="molecule type" value="Genomic_DNA"/>
</dbReference>
<dbReference type="EMBL" id="AJ223508">
    <property type="protein sequence ID" value="CAA11429.1"/>
    <property type="molecule type" value="mRNA"/>
</dbReference>
<dbReference type="EMBL" id="AB026651">
    <property type="protein sequence ID" value="BAB11310.1"/>
    <property type="molecule type" value="Genomic_DNA"/>
</dbReference>
<dbReference type="EMBL" id="CP002688">
    <property type="protein sequence ID" value="AED95011.1"/>
    <property type="molecule type" value="Genomic_DNA"/>
</dbReference>
<dbReference type="EMBL" id="CP002688">
    <property type="protein sequence ID" value="AED95012.1"/>
    <property type="molecule type" value="Genomic_DNA"/>
</dbReference>
<dbReference type="EMBL" id="CP002688">
    <property type="protein sequence ID" value="ANM69955.1"/>
    <property type="molecule type" value="Genomic_DNA"/>
</dbReference>
<dbReference type="EMBL" id="CP002688">
    <property type="protein sequence ID" value="ANM69956.1"/>
    <property type="molecule type" value="Genomic_DNA"/>
</dbReference>
<dbReference type="PIR" id="T52134">
    <property type="entry name" value="T52134"/>
</dbReference>
<dbReference type="RefSeq" id="NP_001190464.1">
    <property type="nucleotide sequence ID" value="NM_001203535.1"/>
</dbReference>
<dbReference type="RefSeq" id="NP_001331599.1">
    <property type="nucleotide sequence ID" value="NM_001344506.1"/>
</dbReference>
<dbReference type="RefSeq" id="NP_001331600.1">
    <property type="nucleotide sequence ID" value="NM_001344505.1"/>
</dbReference>
<dbReference type="RefSeq" id="NP_199194.1">
    <property type="nucleotide sequence ID" value="NM_123748.3"/>
</dbReference>
<dbReference type="PDB" id="7SVA">
    <property type="method" value="EM"/>
    <property type="resolution" value="3.26 A"/>
    <property type="chains" value="A=1-988"/>
</dbReference>
<dbReference type="PDB" id="7SWF">
    <property type="method" value="EM"/>
    <property type="resolution" value="3.79 A"/>
    <property type="chains" value="A=1-988"/>
</dbReference>
<dbReference type="PDB" id="7SWQ">
    <property type="method" value="EM"/>
    <property type="resolution" value="3.79 A"/>
    <property type="chains" value="A=1-988"/>
</dbReference>
<dbReference type="PDBsum" id="7SVA"/>
<dbReference type="PDBsum" id="7SWF"/>
<dbReference type="PDBsum" id="7SWQ"/>
<dbReference type="EMDB" id="EMD-25446"/>
<dbReference type="EMDB" id="EMD-25472"/>
<dbReference type="EMDB" id="EMD-25482"/>
<dbReference type="SMR" id="Q9XGW1"/>
<dbReference type="BioGRID" id="19653">
    <property type="interactions" value="3"/>
</dbReference>
<dbReference type="FunCoup" id="Q9XGW1">
    <property type="interactions" value="3423"/>
</dbReference>
<dbReference type="STRING" id="3702.Q9XGW1"/>
<dbReference type="PaxDb" id="3702-AT5G43810.2"/>
<dbReference type="ProteomicsDB" id="244887"/>
<dbReference type="EnsemblPlants" id="AT5G43810.1">
    <property type="protein sequence ID" value="AT5G43810.1"/>
    <property type="gene ID" value="AT5G43810"/>
</dbReference>
<dbReference type="EnsemblPlants" id="AT5G43810.2">
    <property type="protein sequence ID" value="AT5G43810.2"/>
    <property type="gene ID" value="AT5G43810"/>
</dbReference>
<dbReference type="EnsemblPlants" id="AT5G43810.3">
    <property type="protein sequence ID" value="AT5G43810.3"/>
    <property type="gene ID" value="AT5G43810"/>
</dbReference>
<dbReference type="EnsemblPlants" id="AT5G43810.4">
    <property type="protein sequence ID" value="AT5G43810.4"/>
    <property type="gene ID" value="AT5G43810"/>
</dbReference>
<dbReference type="GeneID" id="834403"/>
<dbReference type="Gramene" id="AT5G43810.1">
    <property type="protein sequence ID" value="AT5G43810.1"/>
    <property type="gene ID" value="AT5G43810"/>
</dbReference>
<dbReference type="Gramene" id="AT5G43810.2">
    <property type="protein sequence ID" value="AT5G43810.2"/>
    <property type="gene ID" value="AT5G43810"/>
</dbReference>
<dbReference type="Gramene" id="AT5G43810.3">
    <property type="protein sequence ID" value="AT5G43810.3"/>
    <property type="gene ID" value="AT5G43810"/>
</dbReference>
<dbReference type="Gramene" id="AT5G43810.4">
    <property type="protein sequence ID" value="AT5G43810.4"/>
    <property type="gene ID" value="AT5G43810"/>
</dbReference>
<dbReference type="KEGG" id="ath:AT5G43810"/>
<dbReference type="Araport" id="AT5G43810"/>
<dbReference type="TAIR" id="AT5G43810">
    <property type="gene designation" value="AGO10"/>
</dbReference>
<dbReference type="eggNOG" id="KOG1041">
    <property type="taxonomic scope" value="Eukaryota"/>
</dbReference>
<dbReference type="HOGENOM" id="CLU_004544_0_0_1"/>
<dbReference type="InParanoid" id="Q9XGW1"/>
<dbReference type="OMA" id="MGQWPGE"/>
<dbReference type="OrthoDB" id="10252740at2759"/>
<dbReference type="PhylomeDB" id="Q9XGW1"/>
<dbReference type="PRO" id="PR:Q9XGW1"/>
<dbReference type="Proteomes" id="UP000006548">
    <property type="component" value="Chromosome 5"/>
</dbReference>
<dbReference type="ExpressionAtlas" id="Q9XGW1">
    <property type="expression patterns" value="baseline and differential"/>
</dbReference>
<dbReference type="GO" id="GO:0005737">
    <property type="term" value="C:cytoplasm"/>
    <property type="evidence" value="ECO:0000314"/>
    <property type="project" value="UniProtKB"/>
</dbReference>
<dbReference type="GO" id="GO:0009536">
    <property type="term" value="C:plastid"/>
    <property type="evidence" value="ECO:0007005"/>
    <property type="project" value="TAIR"/>
</dbReference>
<dbReference type="GO" id="GO:1990904">
    <property type="term" value="C:ribonucleoprotein complex"/>
    <property type="evidence" value="ECO:0007669"/>
    <property type="project" value="UniProtKB-KW"/>
</dbReference>
<dbReference type="GO" id="GO:0035198">
    <property type="term" value="F:miRNA binding"/>
    <property type="evidence" value="ECO:0000314"/>
    <property type="project" value="TAIR"/>
</dbReference>
<dbReference type="GO" id="GO:0051607">
    <property type="term" value="P:defense response to virus"/>
    <property type="evidence" value="ECO:0000314"/>
    <property type="project" value="TAIR"/>
</dbReference>
<dbReference type="GO" id="GO:0010586">
    <property type="term" value="P:miRNA metabolic process"/>
    <property type="evidence" value="ECO:0000315"/>
    <property type="project" value="TAIR"/>
</dbReference>
<dbReference type="GO" id="GO:0010072">
    <property type="term" value="P:primary shoot apical meristem specification"/>
    <property type="evidence" value="ECO:0000315"/>
    <property type="project" value="TAIR"/>
</dbReference>
<dbReference type="GO" id="GO:0009934">
    <property type="term" value="P:regulation of meristem structural organization"/>
    <property type="evidence" value="ECO:0000315"/>
    <property type="project" value="UniProtKB"/>
</dbReference>
<dbReference type="GO" id="GO:1902183">
    <property type="term" value="P:regulation of shoot apical meristem development"/>
    <property type="evidence" value="ECO:0000315"/>
    <property type="project" value="TAIR"/>
</dbReference>
<dbReference type="GO" id="GO:0006417">
    <property type="term" value="P:regulation of translation"/>
    <property type="evidence" value="ECO:0007669"/>
    <property type="project" value="UniProtKB-KW"/>
</dbReference>
<dbReference type="GO" id="GO:0031047">
    <property type="term" value="P:regulatory ncRNA-mediated gene silencing"/>
    <property type="evidence" value="ECO:0007669"/>
    <property type="project" value="UniProtKB-KW"/>
</dbReference>
<dbReference type="GO" id="GO:0035019">
    <property type="term" value="P:somatic stem cell population maintenance"/>
    <property type="evidence" value="ECO:0000315"/>
    <property type="project" value="UniProtKB"/>
</dbReference>
<dbReference type="CDD" id="cd02846">
    <property type="entry name" value="PAZ_argonaute_like"/>
    <property type="match status" value="1"/>
</dbReference>
<dbReference type="CDD" id="cd04657">
    <property type="entry name" value="Piwi_ago-like"/>
    <property type="match status" value="1"/>
</dbReference>
<dbReference type="FunFam" id="3.40.50.2300:FF:000110">
    <property type="entry name" value="Argonaute 10"/>
    <property type="match status" value="1"/>
</dbReference>
<dbReference type="FunFam" id="3.30.420.10:FF:000013">
    <property type="entry name" value="protein argonaute 10-like"/>
    <property type="match status" value="1"/>
</dbReference>
<dbReference type="FunFam" id="2.170.260.10:FF:000001">
    <property type="entry name" value="Protein argonaute-2"/>
    <property type="match status" value="1"/>
</dbReference>
<dbReference type="Gene3D" id="3.40.50.2300">
    <property type="match status" value="1"/>
</dbReference>
<dbReference type="Gene3D" id="2.170.260.10">
    <property type="entry name" value="paz domain"/>
    <property type="match status" value="1"/>
</dbReference>
<dbReference type="Gene3D" id="3.30.420.10">
    <property type="entry name" value="Ribonuclease H-like superfamily/Ribonuclease H"/>
    <property type="match status" value="1"/>
</dbReference>
<dbReference type="InterPro" id="IPR014811">
    <property type="entry name" value="ArgoL1"/>
</dbReference>
<dbReference type="InterPro" id="IPR032472">
    <property type="entry name" value="ArgoL2"/>
</dbReference>
<dbReference type="InterPro" id="IPR032473">
    <property type="entry name" value="Argonaute_Mid_dom"/>
</dbReference>
<dbReference type="InterPro" id="IPR032474">
    <property type="entry name" value="Argonaute_N"/>
</dbReference>
<dbReference type="InterPro" id="IPR003100">
    <property type="entry name" value="PAZ_dom"/>
</dbReference>
<dbReference type="InterPro" id="IPR036085">
    <property type="entry name" value="PAZ_dom_sf"/>
</dbReference>
<dbReference type="InterPro" id="IPR003165">
    <property type="entry name" value="Piwi"/>
</dbReference>
<dbReference type="InterPro" id="IPR045246">
    <property type="entry name" value="Piwi_ago-like"/>
</dbReference>
<dbReference type="InterPro" id="IPR012337">
    <property type="entry name" value="RNaseH-like_sf"/>
</dbReference>
<dbReference type="InterPro" id="IPR036397">
    <property type="entry name" value="RNaseH_sf"/>
</dbReference>
<dbReference type="PANTHER" id="PTHR22891">
    <property type="entry name" value="EUKARYOTIC TRANSLATION INITIATION FACTOR 2C"/>
    <property type="match status" value="1"/>
</dbReference>
<dbReference type="Pfam" id="PF08699">
    <property type="entry name" value="ArgoL1"/>
    <property type="match status" value="1"/>
</dbReference>
<dbReference type="Pfam" id="PF16488">
    <property type="entry name" value="ArgoL2"/>
    <property type="match status" value="1"/>
</dbReference>
<dbReference type="Pfam" id="PF16487">
    <property type="entry name" value="ArgoMid"/>
    <property type="match status" value="1"/>
</dbReference>
<dbReference type="Pfam" id="PF16486">
    <property type="entry name" value="ArgoN"/>
    <property type="match status" value="1"/>
</dbReference>
<dbReference type="Pfam" id="PF02170">
    <property type="entry name" value="PAZ"/>
    <property type="match status" value="1"/>
</dbReference>
<dbReference type="Pfam" id="PF02171">
    <property type="entry name" value="Piwi"/>
    <property type="match status" value="1"/>
</dbReference>
<dbReference type="SMART" id="SM01163">
    <property type="entry name" value="DUF1785"/>
    <property type="match status" value="1"/>
</dbReference>
<dbReference type="SMART" id="SM00949">
    <property type="entry name" value="PAZ"/>
    <property type="match status" value="1"/>
</dbReference>
<dbReference type="SMART" id="SM00950">
    <property type="entry name" value="Piwi"/>
    <property type="match status" value="1"/>
</dbReference>
<dbReference type="SUPFAM" id="SSF101690">
    <property type="entry name" value="PAZ domain"/>
    <property type="match status" value="1"/>
</dbReference>
<dbReference type="SUPFAM" id="SSF53098">
    <property type="entry name" value="Ribonuclease H-like"/>
    <property type="match status" value="1"/>
</dbReference>
<dbReference type="PROSITE" id="PS50821">
    <property type="entry name" value="PAZ"/>
    <property type="match status" value="1"/>
</dbReference>
<dbReference type="PROSITE" id="PS50822">
    <property type="entry name" value="PIWI"/>
    <property type="match status" value="1"/>
</dbReference>
<sequence>MPIRQMKDSSETHLVIKTQPLKHHNPKTVQNGKIPPPSPSPVTVTTPATVTQSQASSPSPPSKNRSRRRNRGGRKSDQGDVCMRPSSRPRKPPPPSQTTSSAVSVATAGEIVAVNHQMQMGVRKNSNFAPRPGFGTLGTKCIVKANHFLADLPTKDLNQYDVTITPEVSSKSVNRAIIAELVRLYKESDLGRRLPAYDGRKSLYTAGELPFTWKEFSVKIVDEDDGIINGPKRERSYKVAIKFVARANMHHLGEFLAGKRADCPQEAVQILDIVLRELSVKRFCPVGRSFFSPDIKTPQRLGEGLESWCGFYQSIRPTQMGLSLNIDMASAAFIEPLPVIEFVAQLLGKDVLSKPLSDSDRVKIKKGLRGVKVEVTHRANVRRKYRVAGLTTQPTRELMFPVDENCTMKSVIEYFQEMYGFTIQHTHLPCLQVGNQKKASYLPMEACKIVEGQRYTKRLNEKQITALLKVTCQRPRDRENDILRTVQHNAYDQDPYAKEFGMNISEKLASVEARILPAPWLKYHENGKEKDCLPQVGQWNMMNKKMINGMTVSRWACVNFSRSVQENVARGFCNELGQMCEVSGMEFNPEPVIPIYSARPDQVEKALKHVYHTSMNKTKGKELELLLAILPDNNGSLYGDLKRICETELGLISQCCLTKHVFKISKQYLANVSLKINVKMGGRNTVLVDAISCRIPLVSDIPTIIFGADVTHPENGEESSPSIAAVVASQDWPEVTKYAGLVCAQAHRQELIQDLYKTWQDPVRGTVSGGMIRDLLISFRKATGQKPLRIIFYRDGVSEGQFYQVLLYELDAIRKACASLEPNYQPPVTFIVVQKRHHTRLFANNHRDKNSTDRSGNILPGTVVDTKICHPTEFDFYLCSHAGIQGTSRPAHYHVLWDENNFTADGIQSLTNNLCYTYARCTRSVSIVPPAYYAHLAAFRARFYLEPEIMQDNGSPGKKNTKTTTVGDVGVKPLPALKENVKRVMFYC</sequence>
<feature type="chain" id="PRO_0000194069" description="Protein argonaute 10">
    <location>
        <begin position="1"/>
        <end position="988"/>
    </location>
</feature>
<feature type="domain" description="PAZ" evidence="1">
    <location>
        <begin position="338"/>
        <end position="451"/>
    </location>
</feature>
<feature type="domain" description="Piwi" evidence="2">
    <location>
        <begin position="625"/>
        <end position="946"/>
    </location>
</feature>
<feature type="region of interest" description="Disordered" evidence="3">
    <location>
        <begin position="1"/>
        <end position="103"/>
    </location>
</feature>
<feature type="compositionally biased region" description="Basic and acidic residues" evidence="3">
    <location>
        <begin position="1"/>
        <end position="11"/>
    </location>
</feature>
<feature type="compositionally biased region" description="Low complexity" evidence="3">
    <location>
        <begin position="41"/>
        <end position="57"/>
    </location>
</feature>
<feature type="compositionally biased region" description="Basic residues" evidence="3">
    <location>
        <begin position="64"/>
        <end position="73"/>
    </location>
</feature>
<feature type="sequence conflict" description="In Ref. 2; CAA11429." evidence="17" ref="2">
    <original>PRDRE</original>
    <variation>AEGQR</variation>
    <location>
        <begin position="475"/>
        <end position="479"/>
    </location>
</feature>
<feature type="sequence conflict" description="In Ref. 2; CAA11429." evidence="17" ref="2">
    <original>N</original>
    <variation>D</variation>
    <location>
        <position position="671"/>
    </location>
</feature>
<feature type="strand" evidence="20">
    <location>
        <begin position="138"/>
        <end position="151"/>
    </location>
</feature>
<feature type="strand" evidence="20">
    <location>
        <begin position="158"/>
        <end position="166"/>
    </location>
</feature>
<feature type="helix" evidence="20">
    <location>
        <begin position="171"/>
        <end position="185"/>
    </location>
</feature>
<feature type="turn" evidence="20">
    <location>
        <begin position="186"/>
        <end position="189"/>
    </location>
</feature>
<feature type="strand" evidence="20">
    <location>
        <begin position="195"/>
        <end position="197"/>
    </location>
</feature>
<feature type="strand" evidence="20">
    <location>
        <begin position="199"/>
        <end position="207"/>
    </location>
</feature>
<feature type="strand" evidence="20">
    <location>
        <begin position="212"/>
        <end position="219"/>
    </location>
</feature>
<feature type="strand" evidence="20">
    <location>
        <begin position="236"/>
        <end position="246"/>
    </location>
</feature>
<feature type="helix" evidence="20">
    <location>
        <begin position="249"/>
        <end position="256"/>
    </location>
</feature>
<feature type="helix" evidence="20">
    <location>
        <begin position="265"/>
        <end position="282"/>
    </location>
</feature>
<feature type="strand" evidence="20">
    <location>
        <begin position="285"/>
        <end position="291"/>
    </location>
</feature>
<feature type="strand" evidence="20">
    <location>
        <begin position="293"/>
        <end position="296"/>
    </location>
</feature>
<feature type="strand" evidence="20">
    <location>
        <begin position="302"/>
        <end position="304"/>
    </location>
</feature>
<feature type="strand" evidence="20">
    <location>
        <begin position="306"/>
        <end position="312"/>
    </location>
</feature>
<feature type="strand" evidence="20">
    <location>
        <begin position="315"/>
        <end position="318"/>
    </location>
</feature>
<feature type="strand" evidence="20">
    <location>
        <begin position="321"/>
        <end position="325"/>
    </location>
</feature>
<feature type="strand" evidence="20">
    <location>
        <begin position="327"/>
        <end position="333"/>
    </location>
</feature>
<feature type="helix" evidence="20">
    <location>
        <begin position="339"/>
        <end position="347"/>
    </location>
</feature>
<feature type="strand" evidence="20">
    <location>
        <begin position="352"/>
        <end position="354"/>
    </location>
</feature>
<feature type="helix" evidence="20">
    <location>
        <begin position="358"/>
        <end position="368"/>
    </location>
</feature>
<feature type="strand" evidence="20">
    <location>
        <begin position="371"/>
        <end position="375"/>
    </location>
</feature>
<feature type="strand" evidence="20">
    <location>
        <begin position="377"/>
        <end position="380"/>
    </location>
</feature>
<feature type="strand" evidence="20">
    <location>
        <begin position="384"/>
        <end position="387"/>
    </location>
</feature>
<feature type="strand" evidence="20">
    <location>
        <begin position="389"/>
        <end position="395"/>
    </location>
</feature>
<feature type="strand" evidence="20">
    <location>
        <begin position="427"/>
        <end position="432"/>
    </location>
</feature>
<feature type="strand" evidence="20">
    <location>
        <begin position="446"/>
        <end position="449"/>
    </location>
</feature>
<feature type="helix" evidence="20">
    <location>
        <begin position="461"/>
        <end position="471"/>
    </location>
</feature>
<feature type="helix" evidence="20">
    <location>
        <begin position="475"/>
        <end position="489"/>
    </location>
</feature>
<feature type="turn" evidence="20">
    <location>
        <begin position="491"/>
        <end position="493"/>
    </location>
</feature>
<feature type="helix" evidence="20">
    <location>
        <begin position="495"/>
        <end position="500"/>
    </location>
</feature>
<feature type="strand" evidence="20">
    <location>
        <begin position="510"/>
        <end position="515"/>
    </location>
</feature>
<feature type="strand" evidence="20">
    <location>
        <begin position="525"/>
        <end position="528"/>
    </location>
</feature>
<feature type="strand" evidence="20">
    <location>
        <begin position="535"/>
        <end position="538"/>
    </location>
</feature>
<feature type="strand" evidence="20">
    <location>
        <begin position="556"/>
        <end position="559"/>
    </location>
</feature>
<feature type="strand" evidence="20">
    <location>
        <begin position="562"/>
        <end position="564"/>
    </location>
</feature>
<feature type="helix" evidence="20">
    <location>
        <begin position="566"/>
        <end position="583"/>
    </location>
</feature>
<feature type="helix" evidence="20">
    <location>
        <begin position="603"/>
        <end position="616"/>
    </location>
</feature>
<feature type="turn" evidence="20">
    <location>
        <begin position="617"/>
        <end position="620"/>
    </location>
</feature>
<feature type="strand" evidence="20">
    <location>
        <begin position="626"/>
        <end position="630"/>
    </location>
</feature>
<feature type="helix" evidence="20">
    <location>
        <begin position="638"/>
        <end position="647"/>
    </location>
</feature>
<feature type="helix" evidence="20">
    <location>
        <begin position="658"/>
        <end position="662"/>
    </location>
</feature>
<feature type="helix" evidence="20">
    <location>
        <begin position="666"/>
        <end position="678"/>
    </location>
</feature>
<feature type="helix" evidence="20">
    <location>
        <begin position="688"/>
        <end position="691"/>
    </location>
</feature>
<feature type="turn" evidence="20">
    <location>
        <begin position="696"/>
        <end position="700"/>
    </location>
</feature>
<feature type="strand" evidence="20">
    <location>
        <begin position="703"/>
        <end position="711"/>
    </location>
</feature>
<feature type="strand" evidence="20">
    <location>
        <begin position="714"/>
        <end position="716"/>
    </location>
</feature>
<feature type="strand" evidence="20">
    <location>
        <begin position="718"/>
        <end position="720"/>
    </location>
</feature>
<feature type="strand" evidence="20">
    <location>
        <begin position="722"/>
        <end position="729"/>
    </location>
</feature>
<feature type="strand" evidence="20">
    <location>
        <begin position="738"/>
        <end position="746"/>
    </location>
</feature>
<feature type="helix" evidence="20">
    <location>
        <begin position="771"/>
        <end position="783"/>
    </location>
</feature>
<feature type="strand" evidence="20">
    <location>
        <begin position="788"/>
        <end position="795"/>
    </location>
</feature>
<feature type="helix" evidence="20">
    <location>
        <begin position="802"/>
        <end position="820"/>
    </location>
</feature>
<feature type="strand" evidence="20">
    <location>
        <begin position="828"/>
        <end position="834"/>
    </location>
</feature>
<feature type="strand" evidence="20">
    <location>
        <begin position="841"/>
        <end position="844"/>
    </location>
</feature>
<feature type="strand" evidence="20">
    <location>
        <begin position="853"/>
        <end position="858"/>
    </location>
</feature>
<feature type="strand" evidence="20">
    <location>
        <begin position="860"/>
        <end position="864"/>
    </location>
</feature>
<feature type="strand" evidence="20">
    <location>
        <begin position="866"/>
        <end position="869"/>
    </location>
</feature>
<feature type="strand" evidence="20">
    <location>
        <begin position="871"/>
        <end position="873"/>
    </location>
</feature>
<feature type="strand" evidence="20">
    <location>
        <begin position="875"/>
        <end position="879"/>
    </location>
</feature>
<feature type="strand" evidence="20">
    <location>
        <begin position="891"/>
        <end position="895"/>
    </location>
</feature>
<feature type="helix" evidence="20">
    <location>
        <begin position="904"/>
        <end position="914"/>
    </location>
</feature>
<feature type="helix" evidence="20">
    <location>
        <begin position="929"/>
        <end position="940"/>
    </location>
</feature>
<feature type="helix" evidence="20">
    <location>
        <begin position="941"/>
        <end position="943"/>
    </location>
</feature>
<feature type="turn" evidence="20">
    <location>
        <begin position="979"/>
        <end position="983"/>
    </location>
</feature>